<dbReference type="EC" id="3.1.1.-"/>
<dbReference type="EMBL" id="AP003917">
    <property type="protein sequence ID" value="BAD08998.1"/>
    <property type="molecule type" value="Genomic_DNA"/>
</dbReference>
<dbReference type="EMBL" id="AP008214">
    <property type="protein sequence ID" value="BAF23958.2"/>
    <property type="status" value="ALT_SEQ"/>
    <property type="molecule type" value="Genomic_DNA"/>
</dbReference>
<dbReference type="EMBL" id="AP014964">
    <property type="status" value="NOT_ANNOTATED_CDS"/>
    <property type="molecule type" value="Genomic_DNA"/>
</dbReference>
<dbReference type="EMBL" id="CM000145">
    <property type="protein sequence ID" value="EAZ43081.1"/>
    <property type="molecule type" value="Genomic_DNA"/>
</dbReference>
<dbReference type="RefSeq" id="XP_015648579.1">
    <property type="nucleotide sequence ID" value="XM_015793093.1"/>
</dbReference>
<dbReference type="SMR" id="Q6ZJD3"/>
<dbReference type="FunCoup" id="Q6ZJD3">
    <property type="interactions" value="9"/>
</dbReference>
<dbReference type="STRING" id="39947.Q6ZJD3"/>
<dbReference type="PaxDb" id="39947-Q6ZJD3"/>
<dbReference type="KEGG" id="dosa:Os08g0477500"/>
<dbReference type="InParanoid" id="Q6ZJD3"/>
<dbReference type="OrthoDB" id="1658288at2759"/>
<dbReference type="Proteomes" id="UP000000763">
    <property type="component" value="Chromosome 8"/>
</dbReference>
<dbReference type="Proteomes" id="UP000007752">
    <property type="component" value="Chromosome 8"/>
</dbReference>
<dbReference type="Proteomes" id="UP000059680">
    <property type="component" value="Chromosome 8"/>
</dbReference>
<dbReference type="GO" id="GO:0047372">
    <property type="term" value="F:monoacylglycerol lipase activity"/>
    <property type="evidence" value="ECO:0000318"/>
    <property type="project" value="GO_Central"/>
</dbReference>
<dbReference type="GO" id="GO:0004620">
    <property type="term" value="F:phospholipase activity"/>
    <property type="evidence" value="ECO:0000318"/>
    <property type="project" value="GO_Central"/>
</dbReference>
<dbReference type="GO" id="GO:0006952">
    <property type="term" value="P:defense response"/>
    <property type="evidence" value="ECO:0007669"/>
    <property type="project" value="UniProtKB-KW"/>
</dbReference>
<dbReference type="GO" id="GO:0016042">
    <property type="term" value="P:lipid catabolic process"/>
    <property type="evidence" value="ECO:0007669"/>
    <property type="project" value="UniProtKB-KW"/>
</dbReference>
<dbReference type="CDD" id="cd07214">
    <property type="entry name" value="Pat17_isozyme_like"/>
    <property type="match status" value="1"/>
</dbReference>
<dbReference type="FunFam" id="3.40.1090.10:FF:000005">
    <property type="entry name" value="Patatin"/>
    <property type="match status" value="1"/>
</dbReference>
<dbReference type="Gene3D" id="3.40.1090.10">
    <property type="entry name" value="Cytosolic phospholipase A2 catalytic domain"/>
    <property type="match status" value="1"/>
</dbReference>
<dbReference type="InterPro" id="IPR016035">
    <property type="entry name" value="Acyl_Trfase/lysoPLipase"/>
</dbReference>
<dbReference type="InterPro" id="IPR002641">
    <property type="entry name" value="PNPLA_dom"/>
</dbReference>
<dbReference type="PANTHER" id="PTHR32176:SF26">
    <property type="entry name" value="PATATIN-LIKE PROTEIN 2"/>
    <property type="match status" value="1"/>
</dbReference>
<dbReference type="PANTHER" id="PTHR32176">
    <property type="entry name" value="XYLOSE ISOMERASE"/>
    <property type="match status" value="1"/>
</dbReference>
<dbReference type="Pfam" id="PF01734">
    <property type="entry name" value="Patatin"/>
    <property type="match status" value="1"/>
</dbReference>
<dbReference type="SUPFAM" id="SSF52151">
    <property type="entry name" value="FabD/lysophospholipase-like"/>
    <property type="match status" value="1"/>
</dbReference>
<dbReference type="PROSITE" id="PS51635">
    <property type="entry name" value="PNPLA"/>
    <property type="match status" value="1"/>
</dbReference>
<proteinExistence type="inferred from homology"/>
<feature type="chain" id="PRO_0000425823" description="Patatin-like protein 2">
    <location>
        <begin position="1"/>
        <end position="405"/>
    </location>
</feature>
<feature type="domain" description="PNPLA" evidence="2">
    <location>
        <begin position="24"/>
        <end position="230"/>
    </location>
</feature>
<feature type="short sequence motif" description="GXGXXG" evidence="2">
    <location>
        <begin position="28"/>
        <end position="33"/>
    </location>
</feature>
<feature type="short sequence motif" description="GXSXG" evidence="2">
    <location>
        <begin position="66"/>
        <end position="70"/>
    </location>
</feature>
<feature type="short sequence motif" description="DGA/G" evidence="2">
    <location>
        <begin position="217"/>
        <end position="219"/>
    </location>
</feature>
<feature type="active site" description="Nucleophile" evidence="2">
    <location>
        <position position="68"/>
    </location>
</feature>
<feature type="active site" description="Proton acceptor" evidence="2">
    <location>
        <position position="217"/>
    </location>
</feature>
<keyword id="KW-0378">Hydrolase</keyword>
<keyword id="KW-0442">Lipid degradation</keyword>
<keyword id="KW-0443">Lipid metabolism</keyword>
<keyword id="KW-0611">Plant defense</keyword>
<keyword id="KW-1185">Reference proteome</keyword>
<protein>
    <recommendedName>
        <fullName>Patatin-like protein 2</fullName>
        <shortName>OsPLP2</shortName>
        <ecNumber>3.1.1.-</ecNumber>
    </recommendedName>
</protein>
<reference key="1">
    <citation type="journal article" date="2005" name="Nature">
        <title>The map-based sequence of the rice genome.</title>
        <authorList>
            <consortium name="International rice genome sequencing project (IRGSP)"/>
        </authorList>
    </citation>
    <scope>NUCLEOTIDE SEQUENCE [LARGE SCALE GENOMIC DNA]</scope>
    <source>
        <strain>cv. Nipponbare</strain>
    </source>
</reference>
<reference key="2">
    <citation type="journal article" date="2008" name="Nucleic Acids Res.">
        <title>The rice annotation project database (RAP-DB): 2008 update.</title>
        <authorList>
            <consortium name="The rice annotation project (RAP)"/>
        </authorList>
    </citation>
    <scope>GENOME REANNOTATION</scope>
    <source>
        <strain>cv. Nipponbare</strain>
    </source>
</reference>
<reference key="3">
    <citation type="journal article" date="2013" name="Rice">
        <title>Improvement of the Oryza sativa Nipponbare reference genome using next generation sequence and optical map data.</title>
        <authorList>
            <person name="Kawahara Y."/>
            <person name="de la Bastide M."/>
            <person name="Hamilton J.P."/>
            <person name="Kanamori H."/>
            <person name="McCombie W.R."/>
            <person name="Ouyang S."/>
            <person name="Schwartz D.C."/>
            <person name="Tanaka T."/>
            <person name="Wu J."/>
            <person name="Zhou S."/>
            <person name="Childs K.L."/>
            <person name="Davidson R.M."/>
            <person name="Lin H."/>
            <person name="Quesada-Ocampo L."/>
            <person name="Vaillancourt B."/>
            <person name="Sakai H."/>
            <person name="Lee S.S."/>
            <person name="Kim J."/>
            <person name="Numa H."/>
            <person name="Itoh T."/>
            <person name="Buell C.R."/>
            <person name="Matsumoto T."/>
        </authorList>
    </citation>
    <scope>GENOME REANNOTATION</scope>
    <source>
        <strain>cv. Nipponbare</strain>
    </source>
</reference>
<reference key="4">
    <citation type="journal article" date="2005" name="PLoS Biol.">
        <title>The genomes of Oryza sativa: a history of duplications.</title>
        <authorList>
            <person name="Yu J."/>
            <person name="Wang J."/>
            <person name="Lin W."/>
            <person name="Li S."/>
            <person name="Li H."/>
            <person name="Zhou J."/>
            <person name="Ni P."/>
            <person name="Dong W."/>
            <person name="Hu S."/>
            <person name="Zeng C."/>
            <person name="Zhang J."/>
            <person name="Zhang Y."/>
            <person name="Li R."/>
            <person name="Xu Z."/>
            <person name="Li S."/>
            <person name="Li X."/>
            <person name="Zheng H."/>
            <person name="Cong L."/>
            <person name="Lin L."/>
            <person name="Yin J."/>
            <person name="Geng J."/>
            <person name="Li G."/>
            <person name="Shi J."/>
            <person name="Liu J."/>
            <person name="Lv H."/>
            <person name="Li J."/>
            <person name="Wang J."/>
            <person name="Deng Y."/>
            <person name="Ran L."/>
            <person name="Shi X."/>
            <person name="Wang X."/>
            <person name="Wu Q."/>
            <person name="Li C."/>
            <person name="Ren X."/>
            <person name="Wang J."/>
            <person name="Wang X."/>
            <person name="Li D."/>
            <person name="Liu D."/>
            <person name="Zhang X."/>
            <person name="Ji Z."/>
            <person name="Zhao W."/>
            <person name="Sun Y."/>
            <person name="Zhang Z."/>
            <person name="Bao J."/>
            <person name="Han Y."/>
            <person name="Dong L."/>
            <person name="Ji J."/>
            <person name="Chen P."/>
            <person name="Wu S."/>
            <person name="Liu J."/>
            <person name="Xiao Y."/>
            <person name="Bu D."/>
            <person name="Tan J."/>
            <person name="Yang L."/>
            <person name="Ye C."/>
            <person name="Zhang J."/>
            <person name="Xu J."/>
            <person name="Zhou Y."/>
            <person name="Yu Y."/>
            <person name="Zhang B."/>
            <person name="Zhuang S."/>
            <person name="Wei H."/>
            <person name="Liu B."/>
            <person name="Lei M."/>
            <person name="Yu H."/>
            <person name="Li Y."/>
            <person name="Xu H."/>
            <person name="Wei S."/>
            <person name="He X."/>
            <person name="Fang L."/>
            <person name="Zhang Z."/>
            <person name="Zhang Y."/>
            <person name="Huang X."/>
            <person name="Su Z."/>
            <person name="Tong W."/>
            <person name="Li J."/>
            <person name="Tong Z."/>
            <person name="Li S."/>
            <person name="Ye J."/>
            <person name="Wang L."/>
            <person name="Fang L."/>
            <person name="Lei T."/>
            <person name="Chen C.-S."/>
            <person name="Chen H.-C."/>
            <person name="Xu Z."/>
            <person name="Li H."/>
            <person name="Huang H."/>
            <person name="Zhang F."/>
            <person name="Xu H."/>
            <person name="Li N."/>
            <person name="Zhao C."/>
            <person name="Li S."/>
            <person name="Dong L."/>
            <person name="Huang Y."/>
            <person name="Li L."/>
            <person name="Xi Y."/>
            <person name="Qi Q."/>
            <person name="Li W."/>
            <person name="Zhang B."/>
            <person name="Hu W."/>
            <person name="Zhang Y."/>
            <person name="Tian X."/>
            <person name="Jiao Y."/>
            <person name="Liang X."/>
            <person name="Jin J."/>
            <person name="Gao L."/>
            <person name="Zheng W."/>
            <person name="Hao B."/>
            <person name="Liu S.-M."/>
            <person name="Wang W."/>
            <person name="Yuan L."/>
            <person name="Cao M."/>
            <person name="McDermott J."/>
            <person name="Samudrala R."/>
            <person name="Wang J."/>
            <person name="Wong G.K.-S."/>
            <person name="Yang H."/>
        </authorList>
    </citation>
    <scope>NUCLEOTIDE SEQUENCE [LARGE SCALE GENOMIC DNA]</scope>
    <source>
        <strain>cv. Nipponbare</strain>
    </source>
</reference>
<name>PLP2_ORYSJ</name>
<accession>Q6ZJD3</accession>
<accession>Q0J507</accession>
<organism>
    <name type="scientific">Oryza sativa subsp. japonica</name>
    <name type="common">Rice</name>
    <dbReference type="NCBI Taxonomy" id="39947"/>
    <lineage>
        <taxon>Eukaryota</taxon>
        <taxon>Viridiplantae</taxon>
        <taxon>Streptophyta</taxon>
        <taxon>Embryophyta</taxon>
        <taxon>Tracheophyta</taxon>
        <taxon>Spermatophyta</taxon>
        <taxon>Magnoliopsida</taxon>
        <taxon>Liliopsida</taxon>
        <taxon>Poales</taxon>
        <taxon>Poaceae</taxon>
        <taxon>BOP clade</taxon>
        <taxon>Oryzoideae</taxon>
        <taxon>Oryzeae</taxon>
        <taxon>Oryzinae</taxon>
        <taxon>Oryza</taxon>
        <taxon>Oryza sativa</taxon>
    </lineage>
</organism>
<sequence>MASASSPEGASSSSPEKVKMVTVLSIDGGGVRGIIPATILAFLEKELQKLDGPDARIADYFDVVAGTSTGGLLTAMLTAPNENNRPLFAADELAKFYIEHSPSIFPQKNWVLSKIAGTLRMVSGPKYDGKYLHSLLREKLGDTRLDKALTNVVIPTFDIANLQPTIFSKFELKYKPLKNALLSDISISTSAAPTFFPAHYFETKDDNGQTREFNLVDGGVAANNPTLCAMSQVSKYIILEDKEDCDFFPVKPTEYGKFMVISIGCGSNHDQKYKAKDAAKWGIFNWLIKGSSAPIIDMFTSASADMVDIHLGVLFSALQCEKNYLRIQYDQLTGSAGSIDDCSKENMDNLVKIGEMLLDKNVSRVDLETGHYVDVAGEGTNRDQLAKFAKQLSDERRRRQNEPSN</sequence>
<gene>
    <name type="primary">PLP2</name>
    <name type="ordered locus">Os08g0477500</name>
    <name type="ordered locus">LOC_Os08g37250</name>
    <name type="ORF">OJ1666_A04.9</name>
    <name type="ORF">OsJ_27671</name>
</gene>
<evidence type="ECO:0000250" key="1"/>
<evidence type="ECO:0000255" key="2">
    <source>
        <dbReference type="PROSITE-ProRule" id="PRU01161"/>
    </source>
</evidence>
<evidence type="ECO:0000305" key="3"/>
<comment type="function">
    <text evidence="1">Possesses non-specific lipolytic acyl hydrolase (LAH) activity. Hydrolyzes phospholipids as well as galactolipids. May play a role in disease resistance (By similarity).</text>
</comment>
<comment type="domain">
    <text evidence="1">The nitrogen atoms of the two glycine residues in the GGXR motif define the oxyanion hole, and stabilize the oxyanion that forms during the nucleophilic attack by the catalytic serine during substrate cleavage.</text>
</comment>
<comment type="similarity">
    <text evidence="3">Belongs to the patatin family.</text>
</comment>
<comment type="sequence caution" evidence="3">
    <conflict type="erroneous gene model prediction">
        <sequence resource="EMBL-CDS" id="BAF23958"/>
    </conflict>
</comment>